<dbReference type="EMBL" id="Z73152">
    <property type="protein sequence ID" value="CAA97498.1"/>
    <property type="molecule type" value="Genomic_DNA"/>
</dbReference>
<dbReference type="EMBL" id="AY693344">
    <property type="protein sequence ID" value="AAT93363.1"/>
    <property type="molecule type" value="Genomic_DNA"/>
</dbReference>
<dbReference type="PIR" id="S64799">
    <property type="entry name" value="S64799"/>
</dbReference>
<dbReference type="SMR" id="Q07881"/>
<dbReference type="DIP" id="DIP-4841N"/>
<dbReference type="PaxDb" id="4932-YLL047W"/>
<dbReference type="EnsemblFungi" id="YLL047W_mRNA">
    <property type="protein sequence ID" value="YLL047W"/>
    <property type="gene ID" value="YLL047W"/>
</dbReference>
<dbReference type="AGR" id="SGD:S000003970"/>
<dbReference type="SGD" id="S000003970">
    <property type="gene designation" value="YLL047W"/>
</dbReference>
<dbReference type="HOGENOM" id="CLU_1972192_0_0_1"/>
<dbReference type="GO" id="GO:0016020">
    <property type="term" value="C:membrane"/>
    <property type="evidence" value="ECO:0007669"/>
    <property type="project" value="UniProtKB-SubCell"/>
</dbReference>
<protein>
    <recommendedName>
        <fullName>Putative uncharacterized protein YLL047W</fullName>
    </recommendedName>
</protein>
<accession>Q07881</accession>
<evidence type="ECO:0000255" key="1"/>
<evidence type="ECO:0000305" key="2"/>
<evidence type="ECO:0000305" key="3">
    <source>
    </source>
</evidence>
<gene>
    <name type="ordered locus">YLL047W</name>
    <name type="ORF">L0709</name>
</gene>
<proteinExistence type="uncertain"/>
<keyword id="KW-0472">Membrane</keyword>
<keyword id="KW-0812">Transmembrane</keyword>
<keyword id="KW-1133">Transmembrane helix</keyword>
<sequence length="127" mass="14843">MMRSQSKYTSYFFFLILFYFCIISSFLFLFIFLGRGYLNQQYSTITCLPTFKFSTFLLNTISSPQVVKLDEGFAGVKLVGKENFVCSQIHQFSSYKVYIFRVNTKDFGKVFICRFHGNVFHIESICG</sequence>
<organism>
    <name type="scientific">Saccharomyces cerevisiae (strain ATCC 204508 / S288c)</name>
    <name type="common">Baker's yeast</name>
    <dbReference type="NCBI Taxonomy" id="559292"/>
    <lineage>
        <taxon>Eukaryota</taxon>
        <taxon>Fungi</taxon>
        <taxon>Dikarya</taxon>
        <taxon>Ascomycota</taxon>
        <taxon>Saccharomycotina</taxon>
        <taxon>Saccharomycetes</taxon>
        <taxon>Saccharomycetales</taxon>
        <taxon>Saccharomycetaceae</taxon>
        <taxon>Saccharomyces</taxon>
    </lineage>
</organism>
<comment type="subcellular location">
    <subcellularLocation>
        <location evidence="2">Membrane</location>
        <topology evidence="2">Single-pass membrane protein</topology>
    </subcellularLocation>
</comment>
<comment type="miscellaneous">
    <text evidence="2">Almost completely overlaps RNP1.</text>
</comment>
<comment type="caution">
    <text evidence="3">Product of a dubious gene prediction unlikely to encode a functional protein. Because of that it is not part of the S.cerevisiae S288c complete/reference proteome set.</text>
</comment>
<name>YL047_YEAST</name>
<reference key="1">
    <citation type="journal article" date="1997" name="Nature">
        <title>The nucleotide sequence of Saccharomyces cerevisiae chromosome XII.</title>
        <authorList>
            <person name="Johnston M."/>
            <person name="Hillier L.W."/>
            <person name="Riles L."/>
            <person name="Albermann K."/>
            <person name="Andre B."/>
            <person name="Ansorge W."/>
            <person name="Benes V."/>
            <person name="Brueckner M."/>
            <person name="Delius H."/>
            <person name="Dubois E."/>
            <person name="Duesterhoeft A."/>
            <person name="Entian K.-D."/>
            <person name="Floeth M."/>
            <person name="Goffeau A."/>
            <person name="Hebling U."/>
            <person name="Heumann K."/>
            <person name="Heuss-Neitzel D."/>
            <person name="Hilbert H."/>
            <person name="Hilger F."/>
            <person name="Kleine K."/>
            <person name="Koetter P."/>
            <person name="Louis E.J."/>
            <person name="Messenguy F."/>
            <person name="Mewes H.-W."/>
            <person name="Miosga T."/>
            <person name="Moestl D."/>
            <person name="Mueller-Auer S."/>
            <person name="Nentwich U."/>
            <person name="Obermaier B."/>
            <person name="Piravandi E."/>
            <person name="Pohl T.M."/>
            <person name="Portetelle D."/>
            <person name="Purnelle B."/>
            <person name="Rechmann S."/>
            <person name="Rieger M."/>
            <person name="Rinke M."/>
            <person name="Rose M."/>
            <person name="Scharfe M."/>
            <person name="Scherens B."/>
            <person name="Scholler P."/>
            <person name="Schwager C."/>
            <person name="Schwarz S."/>
            <person name="Underwood A.P."/>
            <person name="Urrestarazu L.A."/>
            <person name="Vandenbol M."/>
            <person name="Verhasselt P."/>
            <person name="Vierendeels F."/>
            <person name="Voet M."/>
            <person name="Volckaert G."/>
            <person name="Voss H."/>
            <person name="Wambutt R."/>
            <person name="Wedler E."/>
            <person name="Wedler H."/>
            <person name="Zimmermann F.K."/>
            <person name="Zollner A."/>
            <person name="Hani J."/>
            <person name="Hoheisel J.D."/>
        </authorList>
    </citation>
    <scope>NUCLEOTIDE SEQUENCE [LARGE SCALE GENOMIC DNA]</scope>
    <source>
        <strain>ATCC 204508 / S288c</strain>
    </source>
</reference>
<reference key="2">
    <citation type="journal article" date="2014" name="G3 (Bethesda)">
        <title>The reference genome sequence of Saccharomyces cerevisiae: Then and now.</title>
        <authorList>
            <person name="Engel S.R."/>
            <person name="Dietrich F.S."/>
            <person name="Fisk D.G."/>
            <person name="Binkley G."/>
            <person name="Balakrishnan R."/>
            <person name="Costanzo M.C."/>
            <person name="Dwight S.S."/>
            <person name="Hitz B.C."/>
            <person name="Karra K."/>
            <person name="Nash R.S."/>
            <person name="Weng S."/>
            <person name="Wong E.D."/>
            <person name="Lloyd P."/>
            <person name="Skrzypek M.S."/>
            <person name="Miyasato S.R."/>
            <person name="Simison M."/>
            <person name="Cherry J.M."/>
        </authorList>
    </citation>
    <scope>GENOME REANNOTATION</scope>
    <source>
        <strain>ATCC 204508 / S288c</strain>
    </source>
</reference>
<reference key="3">
    <citation type="journal article" date="2007" name="Genome Res.">
        <title>Approaching a complete repository of sequence-verified protein-encoding clones for Saccharomyces cerevisiae.</title>
        <authorList>
            <person name="Hu Y."/>
            <person name="Rolfs A."/>
            <person name="Bhullar B."/>
            <person name="Murthy T.V.S."/>
            <person name="Zhu C."/>
            <person name="Berger M.F."/>
            <person name="Camargo A.A."/>
            <person name="Kelley F."/>
            <person name="McCarron S."/>
            <person name="Jepson D."/>
            <person name="Richardson A."/>
            <person name="Raphael J."/>
            <person name="Moreira D."/>
            <person name="Taycher E."/>
            <person name="Zuo D."/>
            <person name="Mohr S."/>
            <person name="Kane M.F."/>
            <person name="Williamson J."/>
            <person name="Simpson A.J.G."/>
            <person name="Bulyk M.L."/>
            <person name="Harlow E."/>
            <person name="Marsischky G."/>
            <person name="Kolodner R.D."/>
            <person name="LaBaer J."/>
        </authorList>
    </citation>
    <scope>NUCLEOTIDE SEQUENCE [GENOMIC DNA]</scope>
    <source>
        <strain>ATCC 204508 / S288c</strain>
    </source>
</reference>
<feature type="chain" id="PRO_0000299606" description="Putative uncharacterized protein YLL047W">
    <location>
        <begin position="1"/>
        <end position="127"/>
    </location>
</feature>
<feature type="transmembrane region" description="Helical" evidence="1">
    <location>
        <begin position="12"/>
        <end position="32"/>
    </location>
</feature>